<proteinExistence type="inferred from homology"/>
<keyword id="KW-0963">Cytoplasm</keyword>
<keyword id="KW-0489">Methyltransferase</keyword>
<keyword id="KW-0545">Nucleotide biosynthesis</keyword>
<keyword id="KW-1185">Reference proteome</keyword>
<keyword id="KW-0808">Transferase</keyword>
<name>TYSY_PSEPK</name>
<sequence>MKQYLDLVRDVIDNGTLQGNRTGIRTISLPGAMLRFDLQKGFPAITTRKLAFKSAIGEMVGFLRGVKNAGEFRELGCKVWDQNANENAQWLANPFRQGHDDLGEIYGVQWRQWPGYKRIPLSNPAAIEMAEQAGFRRIAQDEEDGVAFVILYKAIDQVRQCLDTIANDPGSRRILFHGWNCAQLDEMALPPCHLLYQFHPNVETREISLTLYIRSNDLGLGTPFNLTEGAALLSLFGRLTGYTPRWFTYFIGDAHVYENHLDMLNEQLKREPLEAPKLVISDRVPAFAETGKYEPEWLEKIEPSDFWLEGYEHHAPMTAPMAV</sequence>
<reference key="1">
    <citation type="journal article" date="2002" name="Environ. Microbiol.">
        <title>Complete genome sequence and comparative analysis of the metabolically versatile Pseudomonas putida KT2440.</title>
        <authorList>
            <person name="Nelson K.E."/>
            <person name="Weinel C."/>
            <person name="Paulsen I.T."/>
            <person name="Dodson R.J."/>
            <person name="Hilbert H."/>
            <person name="Martins dos Santos V.A.P."/>
            <person name="Fouts D.E."/>
            <person name="Gill S.R."/>
            <person name="Pop M."/>
            <person name="Holmes M."/>
            <person name="Brinkac L.M."/>
            <person name="Beanan M.J."/>
            <person name="DeBoy R.T."/>
            <person name="Daugherty S.C."/>
            <person name="Kolonay J.F."/>
            <person name="Madupu R."/>
            <person name="Nelson W.C."/>
            <person name="White O."/>
            <person name="Peterson J.D."/>
            <person name="Khouri H.M."/>
            <person name="Hance I."/>
            <person name="Chris Lee P."/>
            <person name="Holtzapple E.K."/>
            <person name="Scanlan D."/>
            <person name="Tran K."/>
            <person name="Moazzez A."/>
            <person name="Utterback T.R."/>
            <person name="Rizzo M."/>
            <person name="Lee K."/>
            <person name="Kosack D."/>
            <person name="Moestl D."/>
            <person name="Wedler H."/>
            <person name="Lauber J."/>
            <person name="Stjepandic D."/>
            <person name="Hoheisel J."/>
            <person name="Straetz M."/>
            <person name="Heim S."/>
            <person name="Kiewitz C."/>
            <person name="Eisen J.A."/>
            <person name="Timmis K.N."/>
            <person name="Duesterhoeft A."/>
            <person name="Tuemmler B."/>
            <person name="Fraser C.M."/>
        </authorList>
    </citation>
    <scope>NUCLEOTIDE SEQUENCE [LARGE SCALE GENOMIC DNA]</scope>
    <source>
        <strain>ATCC 47054 / DSM 6125 / CFBP 8728 / NCIMB 11950 / KT2440</strain>
    </source>
</reference>
<accession>Q88CN9</accession>
<gene>
    <name evidence="1" type="primary">thyA</name>
    <name type="ordered locus">PP_5141</name>
</gene>
<evidence type="ECO:0000255" key="1">
    <source>
        <dbReference type="HAMAP-Rule" id="MF_00008"/>
    </source>
</evidence>
<dbReference type="EC" id="2.1.1.45" evidence="1"/>
<dbReference type="EMBL" id="AE015451">
    <property type="protein sequence ID" value="AAN70706.1"/>
    <property type="molecule type" value="Genomic_DNA"/>
</dbReference>
<dbReference type="RefSeq" id="NP_747242.1">
    <property type="nucleotide sequence ID" value="NC_002947.4"/>
</dbReference>
<dbReference type="RefSeq" id="WP_010955677.1">
    <property type="nucleotide sequence ID" value="NZ_CP169744.1"/>
</dbReference>
<dbReference type="SMR" id="Q88CN9"/>
<dbReference type="STRING" id="160488.PP_5141"/>
<dbReference type="PaxDb" id="160488-PP_5141"/>
<dbReference type="KEGG" id="ppu:PP_5141"/>
<dbReference type="PATRIC" id="fig|160488.4.peg.5488"/>
<dbReference type="eggNOG" id="COG0207">
    <property type="taxonomic scope" value="Bacteria"/>
</dbReference>
<dbReference type="HOGENOM" id="CLU_021669_0_1_6"/>
<dbReference type="OrthoDB" id="9774633at2"/>
<dbReference type="PhylomeDB" id="Q88CN9"/>
<dbReference type="BioCyc" id="PPUT160488:G1G01-5486-MONOMER"/>
<dbReference type="UniPathway" id="UPA00575"/>
<dbReference type="Proteomes" id="UP000000556">
    <property type="component" value="Chromosome"/>
</dbReference>
<dbReference type="GO" id="GO:0005829">
    <property type="term" value="C:cytosol"/>
    <property type="evidence" value="ECO:0007669"/>
    <property type="project" value="TreeGrafter"/>
</dbReference>
<dbReference type="GO" id="GO:0004799">
    <property type="term" value="F:thymidylate synthase activity"/>
    <property type="evidence" value="ECO:0007669"/>
    <property type="project" value="UniProtKB-UniRule"/>
</dbReference>
<dbReference type="GO" id="GO:0006231">
    <property type="term" value="P:dTMP biosynthetic process"/>
    <property type="evidence" value="ECO:0007669"/>
    <property type="project" value="UniProtKB-UniRule"/>
</dbReference>
<dbReference type="GO" id="GO:0006235">
    <property type="term" value="P:dTTP biosynthetic process"/>
    <property type="evidence" value="ECO:0007669"/>
    <property type="project" value="UniProtKB-UniRule"/>
</dbReference>
<dbReference type="GO" id="GO:0032259">
    <property type="term" value="P:methylation"/>
    <property type="evidence" value="ECO:0007669"/>
    <property type="project" value="UniProtKB-KW"/>
</dbReference>
<dbReference type="CDD" id="cd00351">
    <property type="entry name" value="TS_Pyrimidine_HMase"/>
    <property type="match status" value="1"/>
</dbReference>
<dbReference type="Gene3D" id="3.30.572.10">
    <property type="entry name" value="Thymidylate synthase/dCMP hydroxymethylase domain"/>
    <property type="match status" value="1"/>
</dbReference>
<dbReference type="HAMAP" id="MF_00008">
    <property type="entry name" value="Thymidy_synth_bact"/>
    <property type="match status" value="1"/>
</dbReference>
<dbReference type="InterPro" id="IPR045097">
    <property type="entry name" value="Thymidate_synth/dCMP_Mease"/>
</dbReference>
<dbReference type="InterPro" id="IPR023451">
    <property type="entry name" value="Thymidate_synth/dCMP_Mease_dom"/>
</dbReference>
<dbReference type="InterPro" id="IPR036926">
    <property type="entry name" value="Thymidate_synth/dCMP_Mease_sf"/>
</dbReference>
<dbReference type="InterPro" id="IPR000398">
    <property type="entry name" value="Thymidylate_synthase"/>
</dbReference>
<dbReference type="NCBIfam" id="NF010393">
    <property type="entry name" value="PRK13821.1"/>
    <property type="match status" value="1"/>
</dbReference>
<dbReference type="NCBIfam" id="TIGR03284">
    <property type="entry name" value="thym_sym"/>
    <property type="match status" value="1"/>
</dbReference>
<dbReference type="PANTHER" id="PTHR11548:SF9">
    <property type="entry name" value="THYMIDYLATE SYNTHASE"/>
    <property type="match status" value="1"/>
</dbReference>
<dbReference type="PANTHER" id="PTHR11548">
    <property type="entry name" value="THYMIDYLATE SYNTHASE 1"/>
    <property type="match status" value="1"/>
</dbReference>
<dbReference type="Pfam" id="PF00303">
    <property type="entry name" value="Thymidylat_synt"/>
    <property type="match status" value="1"/>
</dbReference>
<dbReference type="PRINTS" id="PR00108">
    <property type="entry name" value="THYMDSNTHASE"/>
</dbReference>
<dbReference type="SUPFAM" id="SSF55831">
    <property type="entry name" value="Thymidylate synthase/dCMP hydroxymethylase"/>
    <property type="match status" value="1"/>
</dbReference>
<protein>
    <recommendedName>
        <fullName evidence="1">Thymidylate synthase</fullName>
        <shortName evidence="1">TS</shortName>
        <shortName evidence="1">TSase</shortName>
        <ecNumber evidence="1">2.1.1.45</ecNumber>
    </recommendedName>
</protein>
<feature type="chain" id="PRO_0000141005" description="Thymidylate synthase">
    <location>
        <begin position="1"/>
        <end position="323"/>
    </location>
</feature>
<feature type="active site" description="Nucleophile" evidence="1">
    <location>
        <position position="192"/>
    </location>
</feature>
<feature type="binding site" description="in other chain" evidence="1">
    <location>
        <position position="21"/>
    </location>
    <ligand>
        <name>dUMP</name>
        <dbReference type="ChEBI" id="CHEBI:246422"/>
        <note>ligand shared between dimeric partners</note>
    </ligand>
</feature>
<feature type="binding site" evidence="1">
    <location>
        <begin position="172"/>
        <end position="173"/>
    </location>
    <ligand>
        <name>dUMP</name>
        <dbReference type="ChEBI" id="CHEBI:246422"/>
        <note>ligand shared between dimeric partners</note>
    </ligand>
</feature>
<feature type="binding site" description="in other chain" evidence="1">
    <location>
        <begin position="214"/>
        <end position="217"/>
    </location>
    <ligand>
        <name>dUMP</name>
        <dbReference type="ChEBI" id="CHEBI:246422"/>
        <note>ligand shared between dimeric partners</note>
    </ligand>
</feature>
<feature type="binding site" evidence="1">
    <location>
        <position position="217"/>
    </location>
    <ligand>
        <name>(6R)-5,10-methylene-5,6,7,8-tetrahydrofolate</name>
        <dbReference type="ChEBI" id="CHEBI:15636"/>
    </ligand>
</feature>
<feature type="binding site" description="in other chain" evidence="1">
    <location>
        <position position="225"/>
    </location>
    <ligand>
        <name>dUMP</name>
        <dbReference type="ChEBI" id="CHEBI:246422"/>
        <note>ligand shared between dimeric partners</note>
    </ligand>
</feature>
<feature type="binding site" description="in other chain" evidence="1">
    <location>
        <begin position="255"/>
        <end position="257"/>
    </location>
    <ligand>
        <name>dUMP</name>
        <dbReference type="ChEBI" id="CHEBI:246422"/>
        <note>ligand shared between dimeric partners</note>
    </ligand>
</feature>
<feature type="binding site" evidence="1">
    <location>
        <position position="322"/>
    </location>
    <ligand>
        <name>(6R)-5,10-methylene-5,6,7,8-tetrahydrofolate</name>
        <dbReference type="ChEBI" id="CHEBI:15636"/>
    </ligand>
</feature>
<organism>
    <name type="scientific">Pseudomonas putida (strain ATCC 47054 / DSM 6125 / CFBP 8728 / NCIMB 11950 / KT2440)</name>
    <dbReference type="NCBI Taxonomy" id="160488"/>
    <lineage>
        <taxon>Bacteria</taxon>
        <taxon>Pseudomonadati</taxon>
        <taxon>Pseudomonadota</taxon>
        <taxon>Gammaproteobacteria</taxon>
        <taxon>Pseudomonadales</taxon>
        <taxon>Pseudomonadaceae</taxon>
        <taxon>Pseudomonas</taxon>
    </lineage>
</organism>
<comment type="function">
    <text evidence="1">Catalyzes the reductive methylation of 2'-deoxyuridine-5'-monophosphate (dUMP) to 2'-deoxythymidine-5'-monophosphate (dTMP) while utilizing 5,10-methylenetetrahydrofolate (mTHF) as the methyl donor and reductant in the reaction, yielding dihydrofolate (DHF) as a by-product. This enzymatic reaction provides an intracellular de novo source of dTMP, an essential precursor for DNA biosynthesis.</text>
</comment>
<comment type="catalytic activity">
    <reaction evidence="1">
        <text>dUMP + (6R)-5,10-methylene-5,6,7,8-tetrahydrofolate = 7,8-dihydrofolate + dTMP</text>
        <dbReference type="Rhea" id="RHEA:12104"/>
        <dbReference type="ChEBI" id="CHEBI:15636"/>
        <dbReference type="ChEBI" id="CHEBI:57451"/>
        <dbReference type="ChEBI" id="CHEBI:63528"/>
        <dbReference type="ChEBI" id="CHEBI:246422"/>
        <dbReference type="EC" id="2.1.1.45"/>
    </reaction>
</comment>
<comment type="pathway">
    <text evidence="1">Pyrimidine metabolism; dTTP biosynthesis.</text>
</comment>
<comment type="subunit">
    <text evidence="1">Homodimer.</text>
</comment>
<comment type="subcellular location">
    <subcellularLocation>
        <location evidence="1">Cytoplasm</location>
    </subcellularLocation>
</comment>
<comment type="similarity">
    <text evidence="1">Belongs to the thymidylate synthase family. Bacterial-type ThyA subfamily.</text>
</comment>